<feature type="chain" id="PRO_1000123532" description="Small ribosomal subunit protein uS12">
    <location>
        <begin position="1"/>
        <end position="123"/>
    </location>
</feature>
<feature type="region of interest" description="Disordered" evidence="3">
    <location>
        <begin position="1"/>
        <end position="23"/>
    </location>
</feature>
<feature type="modified residue" description="3-methylthioaspartic acid" evidence="1">
    <location>
        <position position="89"/>
    </location>
</feature>
<organism>
    <name type="scientific">Thermodesulfovibrio yellowstonii (strain ATCC 51303 / DSM 11347 / YP87)</name>
    <dbReference type="NCBI Taxonomy" id="289376"/>
    <lineage>
        <taxon>Bacteria</taxon>
        <taxon>Pseudomonadati</taxon>
        <taxon>Nitrospirota</taxon>
        <taxon>Thermodesulfovibrionia</taxon>
        <taxon>Thermodesulfovibrionales</taxon>
        <taxon>Thermodesulfovibrionaceae</taxon>
        <taxon>Thermodesulfovibrio</taxon>
    </lineage>
</organism>
<dbReference type="EMBL" id="CP001147">
    <property type="protein sequence ID" value="ACI20342.1"/>
    <property type="molecule type" value="Genomic_DNA"/>
</dbReference>
<dbReference type="RefSeq" id="WP_012545079.1">
    <property type="nucleotide sequence ID" value="NC_011296.1"/>
</dbReference>
<dbReference type="RefSeq" id="YP_002249250.1">
    <property type="nucleotide sequence ID" value="NC_011296.1"/>
</dbReference>
<dbReference type="SMR" id="B5YG52"/>
<dbReference type="FunCoup" id="B5YG52">
    <property type="interactions" value="429"/>
</dbReference>
<dbReference type="STRING" id="289376.THEYE_A1451"/>
<dbReference type="EnsemblBacteria" id="ACI20342">
    <property type="protein sequence ID" value="ACI20342"/>
    <property type="gene ID" value="THEYE_A1451"/>
</dbReference>
<dbReference type="KEGG" id="tye:THEYE_A1451"/>
<dbReference type="PATRIC" id="fig|289376.4.peg.1412"/>
<dbReference type="eggNOG" id="COG0048">
    <property type="taxonomic scope" value="Bacteria"/>
</dbReference>
<dbReference type="HOGENOM" id="CLU_104295_1_2_0"/>
<dbReference type="InParanoid" id="B5YG52"/>
<dbReference type="OrthoDB" id="9802366at2"/>
<dbReference type="Proteomes" id="UP000000718">
    <property type="component" value="Chromosome"/>
</dbReference>
<dbReference type="GO" id="GO:0005840">
    <property type="term" value="C:ribosome"/>
    <property type="evidence" value="ECO:0000318"/>
    <property type="project" value="GO_Central"/>
</dbReference>
<dbReference type="GO" id="GO:0015935">
    <property type="term" value="C:small ribosomal subunit"/>
    <property type="evidence" value="ECO:0007669"/>
    <property type="project" value="InterPro"/>
</dbReference>
<dbReference type="GO" id="GO:0019843">
    <property type="term" value="F:rRNA binding"/>
    <property type="evidence" value="ECO:0007669"/>
    <property type="project" value="UniProtKB-UniRule"/>
</dbReference>
<dbReference type="GO" id="GO:0003735">
    <property type="term" value="F:structural constituent of ribosome"/>
    <property type="evidence" value="ECO:0000318"/>
    <property type="project" value="GO_Central"/>
</dbReference>
<dbReference type="GO" id="GO:0000049">
    <property type="term" value="F:tRNA binding"/>
    <property type="evidence" value="ECO:0007669"/>
    <property type="project" value="UniProtKB-UniRule"/>
</dbReference>
<dbReference type="GO" id="GO:0006412">
    <property type="term" value="P:translation"/>
    <property type="evidence" value="ECO:0000318"/>
    <property type="project" value="GO_Central"/>
</dbReference>
<dbReference type="CDD" id="cd03368">
    <property type="entry name" value="Ribosomal_S12"/>
    <property type="match status" value="1"/>
</dbReference>
<dbReference type="FunFam" id="2.40.50.140:FF:000001">
    <property type="entry name" value="30S ribosomal protein S12"/>
    <property type="match status" value="1"/>
</dbReference>
<dbReference type="Gene3D" id="2.40.50.140">
    <property type="entry name" value="Nucleic acid-binding proteins"/>
    <property type="match status" value="1"/>
</dbReference>
<dbReference type="HAMAP" id="MF_00403_B">
    <property type="entry name" value="Ribosomal_uS12_B"/>
    <property type="match status" value="1"/>
</dbReference>
<dbReference type="InterPro" id="IPR012340">
    <property type="entry name" value="NA-bd_OB-fold"/>
</dbReference>
<dbReference type="InterPro" id="IPR006032">
    <property type="entry name" value="Ribosomal_uS12"/>
</dbReference>
<dbReference type="InterPro" id="IPR005679">
    <property type="entry name" value="Ribosomal_uS12_bac"/>
</dbReference>
<dbReference type="NCBIfam" id="TIGR00981">
    <property type="entry name" value="rpsL_bact"/>
    <property type="match status" value="1"/>
</dbReference>
<dbReference type="PANTHER" id="PTHR11652">
    <property type="entry name" value="30S RIBOSOMAL PROTEIN S12 FAMILY MEMBER"/>
    <property type="match status" value="1"/>
</dbReference>
<dbReference type="Pfam" id="PF00164">
    <property type="entry name" value="Ribosom_S12_S23"/>
    <property type="match status" value="1"/>
</dbReference>
<dbReference type="PIRSF" id="PIRSF002133">
    <property type="entry name" value="Ribosomal_S12/S23"/>
    <property type="match status" value="1"/>
</dbReference>
<dbReference type="PRINTS" id="PR01034">
    <property type="entry name" value="RIBOSOMALS12"/>
</dbReference>
<dbReference type="SUPFAM" id="SSF50249">
    <property type="entry name" value="Nucleic acid-binding proteins"/>
    <property type="match status" value="1"/>
</dbReference>
<dbReference type="PROSITE" id="PS00055">
    <property type="entry name" value="RIBOSOMAL_S12"/>
    <property type="match status" value="1"/>
</dbReference>
<comment type="function">
    <text evidence="2">With S4 and S5 plays an important role in translational accuracy.</text>
</comment>
<comment type="function">
    <text evidence="2">Interacts with and stabilizes bases of the 16S rRNA that are involved in tRNA selection in the A site and with the mRNA backbone. Located at the interface of the 30S and 50S subunits, it traverses the body of the 30S subunit contacting proteins on the other side and probably holding the rRNA structure together. The combined cluster of proteins S8, S12 and S17 appears to hold together the shoulder and platform of the 30S subunit.</text>
</comment>
<comment type="subunit">
    <text evidence="2">Part of the 30S ribosomal subunit. Contacts proteins S8 and S17. May interact with IF1 in the 30S initiation complex.</text>
</comment>
<comment type="similarity">
    <text evidence="2">Belongs to the universal ribosomal protein uS12 family.</text>
</comment>
<proteinExistence type="inferred from homology"/>
<accession>B5YG52</accession>
<name>RS12_THEYD</name>
<gene>
    <name evidence="2" type="primary">rpsL</name>
    <name type="ordered locus">THEYE_A1451</name>
</gene>
<evidence type="ECO:0000250" key="1"/>
<evidence type="ECO:0000255" key="2">
    <source>
        <dbReference type="HAMAP-Rule" id="MF_00403"/>
    </source>
</evidence>
<evidence type="ECO:0000256" key="3">
    <source>
        <dbReference type="SAM" id="MobiDB-lite"/>
    </source>
</evidence>
<evidence type="ECO:0000305" key="4"/>
<keyword id="KW-0488">Methylation</keyword>
<keyword id="KW-1185">Reference proteome</keyword>
<keyword id="KW-0687">Ribonucleoprotein</keyword>
<keyword id="KW-0689">Ribosomal protein</keyword>
<keyword id="KW-0694">RNA-binding</keyword>
<keyword id="KW-0699">rRNA-binding</keyword>
<keyword id="KW-0820">tRNA-binding</keyword>
<reference key="1">
    <citation type="submission" date="2008-08" db="EMBL/GenBank/DDBJ databases">
        <title>The complete genome sequence of Thermodesulfovibrio yellowstonii strain ATCC 51303 / DSM 11347 / YP87.</title>
        <authorList>
            <person name="Dodson R.J."/>
            <person name="Durkin A.S."/>
            <person name="Wu M."/>
            <person name="Eisen J."/>
            <person name="Sutton G."/>
        </authorList>
    </citation>
    <scope>NUCLEOTIDE SEQUENCE [LARGE SCALE GENOMIC DNA]</scope>
    <source>
        <strain>ATCC 51303 / DSM 11347 / YP87</strain>
    </source>
</reference>
<protein>
    <recommendedName>
        <fullName evidence="2">Small ribosomal subunit protein uS12</fullName>
    </recommendedName>
    <alternativeName>
        <fullName evidence="4">30S ribosomal protein S12</fullName>
    </alternativeName>
</protein>
<sequence>MPTISQLVKKGREKVEKKTKSPALQSCPQKRGVCVRVYTTTPKKPNSALRKVAKVRLTNGVEVIAYIPGEGHNLQEHSIVLVRGGRVKDLPGVRYHIVRGTLDCAGVNNRRQSRSKYGTKRPK</sequence>